<gene>
    <name type="primary">hbd</name>
</gene>
<reference key="1">
    <citation type="journal article" date="1998" name="Electrophoresis">
        <title>Two-dimensional gel electrophoresis separation and N-terminal sequence analysis of proteins from Clostridium pasteurianum W5.</title>
        <authorList>
            <person name="Flengsrud R."/>
            <person name="Skjeldal L."/>
        </authorList>
    </citation>
    <scope>PROTEIN SEQUENCE</scope>
    <source>
        <strain>ATCC 6013 / DSM 525 / NCIB 9486 / VKM B-1774 / W5</strain>
    </source>
</reference>
<name>HBD_CLOPA</name>
<keyword id="KW-0903">Direct protein sequencing</keyword>
<keyword id="KW-0276">Fatty acid metabolism</keyword>
<keyword id="KW-0443">Lipid metabolism</keyword>
<keyword id="KW-0521">NADP</keyword>
<keyword id="KW-0560">Oxidoreductase</keyword>
<protein>
    <recommendedName>
        <fullName>3-hydroxybutyryl-CoA dehydrogenase</fullName>
        <ecNumber>1.1.1.157</ecNumber>
    </recommendedName>
    <alternativeName>
        <fullName>Beta-hydroxybutyryl-CoA dehydrogenase</fullName>
        <shortName>BHBD</shortName>
    </alternativeName>
    <alternativeName>
        <fullName>CP 26</fullName>
    </alternativeName>
</protein>
<feature type="chain" id="PRO_0000109259" description="3-hydroxybutyryl-CoA dehydrogenase">
    <location>
        <begin position="1"/>
        <end position="16" status="greater than"/>
    </location>
</feature>
<feature type="non-terminal residue">
    <location>
        <position position="16"/>
    </location>
</feature>
<proteinExistence type="evidence at protein level"/>
<comment type="catalytic activity">
    <reaction>
        <text>(3S)-3-hydroxybutanoyl-CoA + NADP(+) = acetoacetyl-CoA + NADPH + H(+)</text>
        <dbReference type="Rhea" id="RHEA:16197"/>
        <dbReference type="ChEBI" id="CHEBI:15378"/>
        <dbReference type="ChEBI" id="CHEBI:57286"/>
        <dbReference type="ChEBI" id="CHEBI:57316"/>
        <dbReference type="ChEBI" id="CHEBI:57783"/>
        <dbReference type="ChEBI" id="CHEBI:58349"/>
        <dbReference type="EC" id="1.1.1.157"/>
    </reaction>
</comment>
<comment type="pathway">
    <text>Lipid metabolism; butanoate metabolism.</text>
</comment>
<comment type="similarity">
    <text evidence="1">Belongs to the 3-hydroxyacyl-CoA dehydrogenase family.</text>
</comment>
<accession>P81343</accession>
<sequence>MKKVHVLGAGTMGAGI</sequence>
<dbReference type="EC" id="1.1.1.157"/>
<dbReference type="UniPathway" id="UPA00863"/>
<dbReference type="GO" id="GO:0008691">
    <property type="term" value="F:3-hydroxybutyryl-CoA dehydrogenase activity"/>
    <property type="evidence" value="ECO:0007669"/>
    <property type="project" value="UniProtKB-EC"/>
</dbReference>
<dbReference type="GO" id="GO:0019605">
    <property type="term" value="P:butyrate metabolic process"/>
    <property type="evidence" value="ECO:0007669"/>
    <property type="project" value="UniProtKB-UniPathway"/>
</dbReference>
<organism>
    <name type="scientific">Clostridium pasteurianum</name>
    <dbReference type="NCBI Taxonomy" id="1501"/>
    <lineage>
        <taxon>Bacteria</taxon>
        <taxon>Bacillati</taxon>
        <taxon>Bacillota</taxon>
        <taxon>Clostridia</taxon>
        <taxon>Eubacteriales</taxon>
        <taxon>Clostridiaceae</taxon>
        <taxon>Clostridium</taxon>
    </lineage>
</organism>
<evidence type="ECO:0000305" key="1"/>